<gene>
    <name evidence="1" type="primary">metAA</name>
    <name type="ordered locus">NGR_c31610</name>
</gene>
<name>METAA_SINFN</name>
<comment type="function">
    <text evidence="1">Transfers an acetyl group from acetyl-CoA to L-homoserine, forming acetyl-L-homoserine.</text>
</comment>
<comment type="catalytic activity">
    <reaction evidence="1">
        <text>L-homoserine + acetyl-CoA = O-acetyl-L-homoserine + CoA</text>
        <dbReference type="Rhea" id="RHEA:13701"/>
        <dbReference type="ChEBI" id="CHEBI:57287"/>
        <dbReference type="ChEBI" id="CHEBI:57288"/>
        <dbReference type="ChEBI" id="CHEBI:57476"/>
        <dbReference type="ChEBI" id="CHEBI:57716"/>
        <dbReference type="EC" id="2.3.1.31"/>
    </reaction>
</comment>
<comment type="pathway">
    <text evidence="1">Amino-acid biosynthesis; L-methionine biosynthesis via de novo pathway; O-acetyl-L-homoserine from L-homoserine: step 1/1.</text>
</comment>
<comment type="subcellular location">
    <subcellularLocation>
        <location evidence="1">Cytoplasm</location>
    </subcellularLocation>
</comment>
<comment type="similarity">
    <text evidence="1">Belongs to the MetA family.</text>
</comment>
<evidence type="ECO:0000255" key="1">
    <source>
        <dbReference type="HAMAP-Rule" id="MF_00295"/>
    </source>
</evidence>
<organism>
    <name type="scientific">Sinorhizobium fredii (strain NBRC 101917 / NGR234)</name>
    <dbReference type="NCBI Taxonomy" id="394"/>
    <lineage>
        <taxon>Bacteria</taxon>
        <taxon>Pseudomonadati</taxon>
        <taxon>Pseudomonadota</taxon>
        <taxon>Alphaproteobacteria</taxon>
        <taxon>Hyphomicrobiales</taxon>
        <taxon>Rhizobiaceae</taxon>
        <taxon>Sinorhizobium/Ensifer group</taxon>
        <taxon>Sinorhizobium</taxon>
    </lineage>
</organism>
<feature type="chain" id="PRO_1000191187" description="Homoserine O-acetyltransferase">
    <location>
        <begin position="1"/>
        <end position="307"/>
    </location>
</feature>
<feature type="active site" description="Acyl-thioester intermediate" evidence="1">
    <location>
        <position position="142"/>
    </location>
</feature>
<feature type="active site" description="Proton acceptor" evidence="1">
    <location>
        <position position="235"/>
    </location>
</feature>
<feature type="active site" evidence="1">
    <location>
        <position position="237"/>
    </location>
</feature>
<feature type="binding site" evidence="1">
    <location>
        <position position="163"/>
    </location>
    <ligand>
        <name>substrate</name>
    </ligand>
</feature>
<feature type="binding site" evidence="1">
    <location>
        <position position="192"/>
    </location>
    <ligand>
        <name>substrate</name>
    </ligand>
</feature>
<feature type="binding site" evidence="1">
    <location>
        <position position="249"/>
    </location>
    <ligand>
        <name>substrate</name>
    </ligand>
</feature>
<feature type="site" description="Important for acyl-CoA specificity" evidence="1">
    <location>
        <position position="111"/>
    </location>
</feature>
<feature type="site" description="Important for substrate specificity" evidence="1">
    <location>
        <position position="192"/>
    </location>
</feature>
<sequence>MPIKIPDTLPAFETLVNEGVRVMTETAAVRQDIRPLQIGLLNLMPNKIKTEIQIARLIGATPLQVELTLVRIGGYRPKNTPEEHLFAFYETWEEVKGRKFDGFIITGAPVETLDYEEVTYWDELKSIFEWTETHVHSTLNVCWGAMAAIYHFHGVPKYPLKEKAFGVYRHQNLKPSSVYLNGFSDDFAVPVSRWTEVRRADIDRVPSLEILMESKEMGVCLVHEKKGNRLYMFNHVEYDSTSLSDEYFRDVDAGVPIKLPHDYFPHNDADLPPQNRWRSHAHLFFGNWINEMYQTTPYELEKIGTGD</sequence>
<proteinExistence type="inferred from homology"/>
<keyword id="KW-0012">Acyltransferase</keyword>
<keyword id="KW-0028">Amino-acid biosynthesis</keyword>
<keyword id="KW-0963">Cytoplasm</keyword>
<keyword id="KW-0486">Methionine biosynthesis</keyword>
<keyword id="KW-1185">Reference proteome</keyword>
<keyword id="KW-0808">Transferase</keyword>
<dbReference type="EC" id="2.3.1.31" evidence="1"/>
<dbReference type="EMBL" id="CP001389">
    <property type="protein sequence ID" value="ACP26895.1"/>
    <property type="molecule type" value="Genomic_DNA"/>
</dbReference>
<dbReference type="RefSeq" id="WP_012709646.1">
    <property type="nucleotide sequence ID" value="NC_012587.1"/>
</dbReference>
<dbReference type="RefSeq" id="YP_002827648.1">
    <property type="nucleotide sequence ID" value="NC_012587.1"/>
</dbReference>
<dbReference type="SMR" id="C3M9X0"/>
<dbReference type="STRING" id="394.NGR_c31610"/>
<dbReference type="KEGG" id="rhi:NGR_c31610"/>
<dbReference type="PATRIC" id="fig|394.7.peg.6000"/>
<dbReference type="eggNOG" id="COG1897">
    <property type="taxonomic scope" value="Bacteria"/>
</dbReference>
<dbReference type="HOGENOM" id="CLU_057851_0_1_5"/>
<dbReference type="OrthoDB" id="9772423at2"/>
<dbReference type="UniPathway" id="UPA00051">
    <property type="reaction ID" value="UER00074"/>
</dbReference>
<dbReference type="Proteomes" id="UP000001054">
    <property type="component" value="Chromosome"/>
</dbReference>
<dbReference type="GO" id="GO:0005737">
    <property type="term" value="C:cytoplasm"/>
    <property type="evidence" value="ECO:0007669"/>
    <property type="project" value="UniProtKB-SubCell"/>
</dbReference>
<dbReference type="GO" id="GO:0004414">
    <property type="term" value="F:homoserine O-acetyltransferase activity"/>
    <property type="evidence" value="ECO:0007669"/>
    <property type="project" value="UniProtKB-EC"/>
</dbReference>
<dbReference type="GO" id="GO:0008899">
    <property type="term" value="F:homoserine O-succinyltransferase activity"/>
    <property type="evidence" value="ECO:0007669"/>
    <property type="project" value="UniProtKB-UniRule"/>
</dbReference>
<dbReference type="GO" id="GO:0019281">
    <property type="term" value="P:L-methionine biosynthetic process from homoserine via O-succinyl-L-homoserine and cystathionine"/>
    <property type="evidence" value="ECO:0007669"/>
    <property type="project" value="InterPro"/>
</dbReference>
<dbReference type="CDD" id="cd03131">
    <property type="entry name" value="GATase1_HTS"/>
    <property type="match status" value="1"/>
</dbReference>
<dbReference type="Gene3D" id="3.40.50.880">
    <property type="match status" value="1"/>
</dbReference>
<dbReference type="HAMAP" id="MF_00295">
    <property type="entry name" value="MetA_acyltransf"/>
    <property type="match status" value="1"/>
</dbReference>
<dbReference type="InterPro" id="IPR029062">
    <property type="entry name" value="Class_I_gatase-like"/>
</dbReference>
<dbReference type="InterPro" id="IPR005697">
    <property type="entry name" value="HST_MetA"/>
</dbReference>
<dbReference type="InterPro" id="IPR033752">
    <property type="entry name" value="MetA_family"/>
</dbReference>
<dbReference type="NCBIfam" id="TIGR01001">
    <property type="entry name" value="metA"/>
    <property type="match status" value="1"/>
</dbReference>
<dbReference type="PANTHER" id="PTHR20919">
    <property type="entry name" value="HOMOSERINE O-SUCCINYLTRANSFERASE"/>
    <property type="match status" value="1"/>
</dbReference>
<dbReference type="PANTHER" id="PTHR20919:SF0">
    <property type="entry name" value="HOMOSERINE O-SUCCINYLTRANSFERASE"/>
    <property type="match status" value="1"/>
</dbReference>
<dbReference type="Pfam" id="PF04204">
    <property type="entry name" value="HTS"/>
    <property type="match status" value="1"/>
</dbReference>
<dbReference type="PIRSF" id="PIRSF000450">
    <property type="entry name" value="H_ser_succinyltr"/>
    <property type="match status" value="1"/>
</dbReference>
<dbReference type="SUPFAM" id="SSF52317">
    <property type="entry name" value="Class I glutamine amidotransferase-like"/>
    <property type="match status" value="1"/>
</dbReference>
<reference key="1">
    <citation type="journal article" date="2009" name="Appl. Environ. Microbiol.">
        <title>Rhizobium sp. strain NGR234 possesses a remarkable number of secretion systems.</title>
        <authorList>
            <person name="Schmeisser C."/>
            <person name="Liesegang H."/>
            <person name="Krysciak D."/>
            <person name="Bakkou N."/>
            <person name="Le Quere A."/>
            <person name="Wollherr A."/>
            <person name="Heinemeyer I."/>
            <person name="Morgenstern B."/>
            <person name="Pommerening-Roeser A."/>
            <person name="Flores M."/>
            <person name="Palacios R."/>
            <person name="Brenner S."/>
            <person name="Gottschalk G."/>
            <person name="Schmitz R.A."/>
            <person name="Broughton W.J."/>
            <person name="Perret X."/>
            <person name="Strittmatter A.W."/>
            <person name="Streit W.R."/>
        </authorList>
    </citation>
    <scope>NUCLEOTIDE SEQUENCE [LARGE SCALE GENOMIC DNA]</scope>
    <source>
        <strain>NBRC 101917 / NGR234</strain>
    </source>
</reference>
<accession>C3M9X0</accession>
<protein>
    <recommendedName>
        <fullName evidence="1">Homoserine O-acetyltransferase</fullName>
        <shortName evidence="1">HAT</shortName>
        <ecNumber evidence="1">2.3.1.31</ecNumber>
    </recommendedName>
    <alternativeName>
        <fullName evidence="1">Homoserine transacetylase</fullName>
        <shortName evidence="1">HTA</shortName>
    </alternativeName>
</protein>